<accession>P68724</accession>
<proteinExistence type="evidence at protein level"/>
<sequence length="88" mass="9993">MKFFLLFLVVLPIMGVLGKKNGFAVDSNGKAPECFFDHYCNSECTKVYYAEKGYCCTLSCYCVGLDDDKKVLDISDTRKKLCDFTLFN</sequence>
<dbReference type="SMR" id="P68724"/>
<dbReference type="GO" id="GO:0005576">
    <property type="term" value="C:extracellular region"/>
    <property type="evidence" value="ECO:0007669"/>
    <property type="project" value="UniProtKB-SubCell"/>
</dbReference>
<dbReference type="GO" id="GO:0008200">
    <property type="term" value="F:ion channel inhibitor activity"/>
    <property type="evidence" value="ECO:0007669"/>
    <property type="project" value="InterPro"/>
</dbReference>
<dbReference type="GO" id="GO:0017080">
    <property type="term" value="F:sodium channel regulator activity"/>
    <property type="evidence" value="ECO:0007669"/>
    <property type="project" value="UniProtKB-KW"/>
</dbReference>
<dbReference type="GO" id="GO:0090729">
    <property type="term" value="F:toxin activity"/>
    <property type="evidence" value="ECO:0007669"/>
    <property type="project" value="UniProtKB-KW"/>
</dbReference>
<dbReference type="CDD" id="cd23106">
    <property type="entry name" value="neurotoxins_LC_scorpion"/>
    <property type="match status" value="1"/>
</dbReference>
<dbReference type="Gene3D" id="3.30.30.10">
    <property type="entry name" value="Knottin, scorpion toxin-like"/>
    <property type="match status" value="1"/>
</dbReference>
<dbReference type="InterPro" id="IPR044062">
    <property type="entry name" value="LCN-type_CS_alpha_beta_dom"/>
</dbReference>
<dbReference type="InterPro" id="IPR036574">
    <property type="entry name" value="Scorpion_toxin-like_sf"/>
</dbReference>
<dbReference type="SUPFAM" id="SSF57095">
    <property type="entry name" value="Scorpion toxin-like"/>
    <property type="match status" value="1"/>
</dbReference>
<dbReference type="PROSITE" id="PS51863">
    <property type="entry name" value="LCN_CSAB"/>
    <property type="match status" value="1"/>
</dbReference>
<comment type="function">
    <text evidence="1">Excitatory insect toxins induce a spastic paralysis. They bind voltage-independently at site-4 of sodium channels (Nav) and shift the voltage of activation toward more negative potentials thereby affecting sodium channel activation and promoting spontaneous and repetitive firing (By similarity).</text>
</comment>
<comment type="subcellular location">
    <subcellularLocation>
        <location evidence="5">Secreted</location>
    </subcellularLocation>
</comment>
<comment type="tissue specificity">
    <text evidence="7">Expressed by the venom gland.</text>
</comment>
<comment type="domain">
    <text evidence="6">Has the structural arrangement of an alpha-helix connected to antiparallel beta-sheets by disulfide bonds (CS-alpha/beta).</text>
</comment>
<comment type="similarity">
    <text evidence="6">Belongs to the long (4 C-C) scorpion toxin superfamily. Sodium channel inhibitor family. Beta subfamily.</text>
</comment>
<evidence type="ECO:0000250" key="1"/>
<evidence type="ECO:0000250" key="2">
    <source>
        <dbReference type="UniProtKB" id="P56637"/>
    </source>
</evidence>
<evidence type="ECO:0000255" key="3"/>
<evidence type="ECO:0000255" key="4">
    <source>
        <dbReference type="PROSITE-ProRule" id="PRU01210"/>
    </source>
</evidence>
<evidence type="ECO:0000269" key="5">
    <source>
    </source>
</evidence>
<evidence type="ECO:0000305" key="6"/>
<evidence type="ECO:0000305" key="7">
    <source>
    </source>
</evidence>
<name>SIX1D_LEIHE</name>
<protein>
    <recommendedName>
        <fullName>Beta-insect excitatory toxin LqhIT1d</fullName>
    </recommendedName>
    <alternativeName>
        <fullName>Insect neurotoxin 1d</fullName>
    </alternativeName>
    <alternativeName>
        <fullName>Lqh IT1-d</fullName>
        <shortName>LqhIT1-d</shortName>
    </alternativeName>
    <alternativeName>
        <fullName>Lqh-xtrITd</fullName>
    </alternativeName>
</protein>
<reference key="1">
    <citation type="journal article" date="1999" name="J. Mol. Evol.">
        <title>Dynamic diversification from a putative common ancestor of scorpion toxins affecting sodium, potassium, and chloride channels.</title>
        <authorList>
            <person name="Froy O."/>
            <person name="Sagiv T."/>
            <person name="Poreh M."/>
            <person name="Urbach D."/>
            <person name="Zilberberg N."/>
            <person name="Gurevitz M."/>
        </authorList>
    </citation>
    <scope>NUCLEOTIDE SEQUENCE [GENOMIC DNA]</scope>
</reference>
<reference key="2">
    <citation type="journal article" date="2006" name="Toxicon">
        <title>Moving pieces in a taxonomic puzzle: venom 2D-LC/MS and data clustering analyses to infer phylogenetic relationships in some scorpions from the Buthidae family (Scorpiones).</title>
        <authorList>
            <person name="Nascimento D.G."/>
            <person name="Rates B."/>
            <person name="Santos D.M."/>
            <person name="Verano-Braga T."/>
            <person name="Barbosa-Silva A."/>
            <person name="Dutra A.A.A."/>
            <person name="Biondi I."/>
            <person name="Martin-Eauclaire M.-F."/>
            <person name="De Lima M.E."/>
            <person name="Pimenta A.M.C."/>
        </authorList>
    </citation>
    <scope>IDENTIFICATION BY MASS SPECTROMETRY</scope>
    <scope>SUBCELLULAR LOCATION</scope>
    <source>
        <tissue>Venom</tissue>
    </source>
</reference>
<organism>
    <name type="scientific">Leiurus hebraeus</name>
    <name type="common">Hebrew deathstalker scorpion</name>
    <name type="synonym">Leiurus quinquestriatus hebraeus</name>
    <dbReference type="NCBI Taxonomy" id="2899558"/>
    <lineage>
        <taxon>Eukaryota</taxon>
        <taxon>Metazoa</taxon>
        <taxon>Ecdysozoa</taxon>
        <taxon>Arthropoda</taxon>
        <taxon>Chelicerata</taxon>
        <taxon>Arachnida</taxon>
        <taxon>Scorpiones</taxon>
        <taxon>Buthida</taxon>
        <taxon>Buthoidea</taxon>
        <taxon>Buthidae</taxon>
        <taxon>Leiurus</taxon>
    </lineage>
</organism>
<feature type="signal peptide" evidence="3">
    <location>
        <begin position="1"/>
        <end position="18"/>
    </location>
</feature>
<feature type="chain" id="PRO_0000035192" description="Beta-insect excitatory toxin LqhIT1d" evidence="7">
    <location>
        <begin position="19"/>
        <end position="88"/>
    </location>
</feature>
<feature type="domain" description="LCN-type CS-alpha/beta" evidence="4">
    <location>
        <begin position="20"/>
        <end position="83"/>
    </location>
</feature>
<feature type="disulfide bond" evidence="2">
    <location>
        <begin position="34"/>
        <end position="55"/>
    </location>
</feature>
<feature type="disulfide bond" evidence="2">
    <location>
        <begin position="40"/>
        <end position="60"/>
    </location>
</feature>
<feature type="disulfide bond" evidence="2">
    <location>
        <begin position="44"/>
        <end position="62"/>
    </location>
</feature>
<feature type="disulfide bond" evidence="2">
    <location>
        <begin position="56"/>
        <end position="82"/>
    </location>
</feature>
<keyword id="KW-1015">Disulfide bond</keyword>
<keyword id="KW-0872">Ion channel impairing toxin</keyword>
<keyword id="KW-0528">Neurotoxin</keyword>
<keyword id="KW-0964">Secreted</keyword>
<keyword id="KW-0732">Signal</keyword>
<keyword id="KW-0800">Toxin</keyword>
<keyword id="KW-0738">Voltage-gated sodium channel impairing toxin</keyword>